<organism>
    <name type="scientific">Streptococcus agalactiae serotype V (strain ATCC BAA-611 / 2603 V/R)</name>
    <dbReference type="NCBI Taxonomy" id="208435"/>
    <lineage>
        <taxon>Bacteria</taxon>
        <taxon>Bacillati</taxon>
        <taxon>Bacillota</taxon>
        <taxon>Bacilli</taxon>
        <taxon>Lactobacillales</taxon>
        <taxon>Streptococcaceae</taxon>
        <taxon>Streptococcus</taxon>
    </lineage>
</organism>
<keyword id="KW-0413">Isomerase</keyword>
<keyword id="KW-0423">Lactose metabolism</keyword>
<keyword id="KW-1185">Reference proteome</keyword>
<protein>
    <recommendedName>
        <fullName evidence="1">Galactose-6-phosphate isomerase subunit LacB</fullName>
        <ecNumber evidence="1">5.3.1.26</ecNumber>
    </recommendedName>
</protein>
<accession>Q8DXC1</accession>
<sequence>MKIAVGCDHIVTYDKIAVVDYLKTKGYEVIDCGTYDNIRTHYPIYGKKVGEAVASGKADLGVCICGTGVGINNAVNKVPGIRSALVRDLTSAIYAKEELNANVIGFGGKITGGLLMTDIIEAFIRAKYKPTKENKVLIEKIAEVETHNAHQEENDFFTEFLDKWNRGEYHD</sequence>
<comment type="catalytic activity">
    <reaction evidence="1">
        <text>aldehydo-D-galactose 6-phosphate = keto-D-tagatose 6-phosphate</text>
        <dbReference type="Rhea" id="RHEA:13033"/>
        <dbReference type="ChEBI" id="CHEBI:58255"/>
        <dbReference type="ChEBI" id="CHEBI:134283"/>
        <dbReference type="EC" id="5.3.1.26"/>
    </reaction>
</comment>
<comment type="pathway">
    <text evidence="1">Carbohydrate metabolism; D-galactose 6-phosphate degradation; D-tagatose 6-phosphate from D-galactose 6-phosphate: step 1/1.</text>
</comment>
<comment type="subunit">
    <text evidence="1">Heteromultimeric protein consisting of LacA and LacB.</text>
</comment>
<comment type="similarity">
    <text evidence="1">Belongs to the LacAB/RpiB family.</text>
</comment>
<proteinExistence type="inferred from homology"/>
<reference key="1">
    <citation type="journal article" date="2002" name="Proc. Natl. Acad. Sci. U.S.A.">
        <title>Complete genome sequence and comparative genomic analysis of an emerging human pathogen, serotype V Streptococcus agalactiae.</title>
        <authorList>
            <person name="Tettelin H."/>
            <person name="Masignani V."/>
            <person name="Cieslewicz M.J."/>
            <person name="Eisen J.A."/>
            <person name="Peterson S.N."/>
            <person name="Wessels M.R."/>
            <person name="Paulsen I.T."/>
            <person name="Nelson K.E."/>
            <person name="Margarit I."/>
            <person name="Read T.D."/>
            <person name="Madoff L.C."/>
            <person name="Wolf A.M."/>
            <person name="Beanan M.J."/>
            <person name="Brinkac L.M."/>
            <person name="Daugherty S.C."/>
            <person name="DeBoy R.T."/>
            <person name="Durkin A.S."/>
            <person name="Kolonay J.F."/>
            <person name="Madupu R."/>
            <person name="Lewis M.R."/>
            <person name="Radune D."/>
            <person name="Fedorova N.B."/>
            <person name="Scanlan D."/>
            <person name="Khouri H.M."/>
            <person name="Mulligan S."/>
            <person name="Carty H.A."/>
            <person name="Cline R.T."/>
            <person name="Van Aken S.E."/>
            <person name="Gill J."/>
            <person name="Scarselli M."/>
            <person name="Mora M."/>
            <person name="Iacobini E.T."/>
            <person name="Brettoni C."/>
            <person name="Galli G."/>
            <person name="Mariani M."/>
            <person name="Vegni F."/>
            <person name="Maione D."/>
            <person name="Rinaudo D."/>
            <person name="Rappuoli R."/>
            <person name="Telford J.L."/>
            <person name="Kasper D.L."/>
            <person name="Grandi G."/>
            <person name="Fraser C.M."/>
        </authorList>
    </citation>
    <scope>NUCLEOTIDE SEQUENCE [LARGE SCALE GENOMIC DNA]</scope>
    <source>
        <strain>ATCC BAA-611 / 2603 V/R</strain>
    </source>
</reference>
<name>LACB_STRA5</name>
<dbReference type="EC" id="5.3.1.26" evidence="1"/>
<dbReference type="EMBL" id="AE009948">
    <property type="protein sequence ID" value="AAN00792.1"/>
    <property type="molecule type" value="Genomic_DNA"/>
</dbReference>
<dbReference type="RefSeq" id="NP_688919.1">
    <property type="nucleotide sequence ID" value="NC_004116.1"/>
</dbReference>
<dbReference type="RefSeq" id="WP_000686152.1">
    <property type="nucleotide sequence ID" value="NC_004116.1"/>
</dbReference>
<dbReference type="SMR" id="Q8DXC1"/>
<dbReference type="STRING" id="208435.SAG1930"/>
<dbReference type="GeneID" id="66886714"/>
<dbReference type="KEGG" id="sag:SAG1930"/>
<dbReference type="PATRIC" id="fig|208435.3.peg.1935"/>
<dbReference type="HOGENOM" id="CLU_091396_2_0_9"/>
<dbReference type="OrthoDB" id="1778624at2"/>
<dbReference type="UniPathway" id="UPA00702">
    <property type="reaction ID" value="UER00714"/>
</dbReference>
<dbReference type="Proteomes" id="UP000000821">
    <property type="component" value="Chromosome"/>
</dbReference>
<dbReference type="GO" id="GO:0050044">
    <property type="term" value="F:galactose-6-phosphate isomerase activity"/>
    <property type="evidence" value="ECO:0007669"/>
    <property type="project" value="UniProtKB-UniRule"/>
</dbReference>
<dbReference type="GO" id="GO:0004751">
    <property type="term" value="F:ribose-5-phosphate isomerase activity"/>
    <property type="evidence" value="ECO:0007669"/>
    <property type="project" value="TreeGrafter"/>
</dbReference>
<dbReference type="GO" id="GO:0019316">
    <property type="term" value="P:D-allose catabolic process"/>
    <property type="evidence" value="ECO:0007669"/>
    <property type="project" value="TreeGrafter"/>
</dbReference>
<dbReference type="GO" id="GO:0019388">
    <property type="term" value="P:galactose catabolic process"/>
    <property type="evidence" value="ECO:0007669"/>
    <property type="project" value="UniProtKB-UniPathway"/>
</dbReference>
<dbReference type="GO" id="GO:0019512">
    <property type="term" value="P:lactose catabolic process via tagatose-6-phosphate"/>
    <property type="evidence" value="ECO:0007669"/>
    <property type="project" value="UniProtKB-UniRule"/>
</dbReference>
<dbReference type="GO" id="GO:0009052">
    <property type="term" value="P:pentose-phosphate shunt, non-oxidative branch"/>
    <property type="evidence" value="ECO:0007669"/>
    <property type="project" value="TreeGrafter"/>
</dbReference>
<dbReference type="Gene3D" id="3.40.1400.10">
    <property type="entry name" value="Sugar-phosphate isomerase, RpiB/LacA/LacB"/>
    <property type="match status" value="1"/>
</dbReference>
<dbReference type="HAMAP" id="MF_01556">
    <property type="entry name" value="LacB"/>
    <property type="match status" value="1"/>
</dbReference>
<dbReference type="InterPro" id="IPR004784">
    <property type="entry name" value="LacB"/>
</dbReference>
<dbReference type="InterPro" id="IPR003500">
    <property type="entry name" value="RpiB_LacA_LacB"/>
</dbReference>
<dbReference type="InterPro" id="IPR036569">
    <property type="entry name" value="RpiB_LacA_LacB_sf"/>
</dbReference>
<dbReference type="NCBIfam" id="TIGR01119">
    <property type="entry name" value="lacB"/>
    <property type="match status" value="1"/>
</dbReference>
<dbReference type="NCBIfam" id="NF004051">
    <property type="entry name" value="PRK05571.1"/>
    <property type="match status" value="1"/>
</dbReference>
<dbReference type="NCBIfam" id="NF006381">
    <property type="entry name" value="PRK08622.1"/>
    <property type="match status" value="1"/>
</dbReference>
<dbReference type="NCBIfam" id="NF009258">
    <property type="entry name" value="PRK12615.1"/>
    <property type="match status" value="1"/>
</dbReference>
<dbReference type="NCBIfam" id="TIGR00689">
    <property type="entry name" value="rpiB_lacA_lacB"/>
    <property type="match status" value="1"/>
</dbReference>
<dbReference type="PANTHER" id="PTHR30345:SF0">
    <property type="entry name" value="DNA DAMAGE-REPAIR_TOLERATION PROTEIN DRT102"/>
    <property type="match status" value="1"/>
</dbReference>
<dbReference type="PANTHER" id="PTHR30345">
    <property type="entry name" value="RIBOSE-5-PHOSPHATE ISOMERASE B"/>
    <property type="match status" value="1"/>
</dbReference>
<dbReference type="Pfam" id="PF02502">
    <property type="entry name" value="LacAB_rpiB"/>
    <property type="match status" value="1"/>
</dbReference>
<dbReference type="PIRSF" id="PIRSF005384">
    <property type="entry name" value="RpiB_LacA_B"/>
    <property type="match status" value="1"/>
</dbReference>
<dbReference type="SUPFAM" id="SSF89623">
    <property type="entry name" value="Ribose/Galactose isomerase RpiB/AlsB"/>
    <property type="match status" value="1"/>
</dbReference>
<feature type="chain" id="PRO_0000208149" description="Galactose-6-phosphate isomerase subunit LacB">
    <location>
        <begin position="1"/>
        <end position="171"/>
    </location>
</feature>
<evidence type="ECO:0000255" key="1">
    <source>
        <dbReference type="HAMAP-Rule" id="MF_01556"/>
    </source>
</evidence>
<gene>
    <name evidence="1" type="primary">lacB</name>
    <name type="ordered locus">SAG1930</name>
</gene>